<organism>
    <name type="scientific">Legionella pneumophila (strain Corby)</name>
    <dbReference type="NCBI Taxonomy" id="400673"/>
    <lineage>
        <taxon>Bacteria</taxon>
        <taxon>Pseudomonadati</taxon>
        <taxon>Pseudomonadota</taxon>
        <taxon>Gammaproteobacteria</taxon>
        <taxon>Legionellales</taxon>
        <taxon>Legionellaceae</taxon>
        <taxon>Legionella</taxon>
    </lineage>
</organism>
<gene>
    <name evidence="1" type="primary">dapF</name>
    <name type="ordered locus">LPC_2978</name>
</gene>
<sequence>MGIKFTKMHGLGNDFIVLDGVNQSIQLTVEQIQKLANRHTGIGFDQCLLIESSQTEGIDFNYRIFNADGQEVGQCGNGARCIALFARYYGLTAKNKLTVATKTTLMDLIINEDNSVSVNMGVPRLAPGEIPLLADRQSPEYSLELNNGNTVNLHAISVGNPHAVLLVENIDTAPVNSLGQQISFHPQFPEQVNVGFMQIVNHEKINLRVYERGCGETIACGSGAVAAAAIARLFYNLSDKITVHLPGGDLCIQWPCPTAPIILTGPAAFVYEGTLLS</sequence>
<comment type="function">
    <text evidence="1">Catalyzes the stereoinversion of LL-2,6-diaminopimelate (L,L-DAP) to meso-diaminopimelate (meso-DAP), a precursor of L-lysine and an essential component of the bacterial peptidoglycan.</text>
</comment>
<comment type="catalytic activity">
    <reaction evidence="1">
        <text>(2S,6S)-2,6-diaminopimelate = meso-2,6-diaminopimelate</text>
        <dbReference type="Rhea" id="RHEA:15393"/>
        <dbReference type="ChEBI" id="CHEBI:57609"/>
        <dbReference type="ChEBI" id="CHEBI:57791"/>
        <dbReference type="EC" id="5.1.1.7"/>
    </reaction>
</comment>
<comment type="pathway">
    <text evidence="1">Amino-acid biosynthesis; L-lysine biosynthesis via DAP pathway; DL-2,6-diaminopimelate from LL-2,6-diaminopimelate: step 1/1.</text>
</comment>
<comment type="subunit">
    <text evidence="1">Homodimer.</text>
</comment>
<comment type="subcellular location">
    <subcellularLocation>
        <location evidence="1">Cytoplasm</location>
    </subcellularLocation>
</comment>
<comment type="similarity">
    <text evidence="1">Belongs to the diaminopimelate epimerase family.</text>
</comment>
<accession>A5IHM9</accession>
<feature type="chain" id="PRO_1000011894" description="Diaminopimelate epimerase">
    <location>
        <begin position="1"/>
        <end position="277"/>
    </location>
</feature>
<feature type="active site" description="Proton donor" evidence="1">
    <location>
        <position position="75"/>
    </location>
</feature>
<feature type="active site" description="Proton acceptor" evidence="1">
    <location>
        <position position="220"/>
    </location>
</feature>
<feature type="binding site" evidence="1">
    <location>
        <position position="13"/>
    </location>
    <ligand>
        <name>substrate</name>
    </ligand>
</feature>
<feature type="binding site" evidence="1">
    <location>
        <position position="46"/>
    </location>
    <ligand>
        <name>substrate</name>
    </ligand>
</feature>
<feature type="binding site" evidence="1">
    <location>
        <position position="66"/>
    </location>
    <ligand>
        <name>substrate</name>
    </ligand>
</feature>
<feature type="binding site" evidence="1">
    <location>
        <begin position="76"/>
        <end position="77"/>
    </location>
    <ligand>
        <name>substrate</name>
    </ligand>
</feature>
<feature type="binding site" evidence="1">
    <location>
        <position position="160"/>
    </location>
    <ligand>
        <name>substrate</name>
    </ligand>
</feature>
<feature type="binding site" evidence="1">
    <location>
        <position position="193"/>
    </location>
    <ligand>
        <name>substrate</name>
    </ligand>
</feature>
<feature type="binding site" evidence="1">
    <location>
        <begin position="211"/>
        <end position="212"/>
    </location>
    <ligand>
        <name>substrate</name>
    </ligand>
</feature>
<feature type="binding site" evidence="1">
    <location>
        <begin position="221"/>
        <end position="222"/>
    </location>
    <ligand>
        <name>substrate</name>
    </ligand>
</feature>
<feature type="site" description="Could be important to modulate the pK values of the two catalytic cysteine residues" evidence="1">
    <location>
        <position position="162"/>
    </location>
</feature>
<feature type="site" description="Could be important to modulate the pK values of the two catalytic cysteine residues" evidence="1">
    <location>
        <position position="211"/>
    </location>
</feature>
<feature type="site" description="Important for dimerization" evidence="1">
    <location>
        <position position="271"/>
    </location>
</feature>
<protein>
    <recommendedName>
        <fullName evidence="1">Diaminopimelate epimerase</fullName>
        <shortName evidence="1">DAP epimerase</shortName>
        <ecNumber evidence="1">5.1.1.7</ecNumber>
    </recommendedName>
    <alternativeName>
        <fullName evidence="1">PLP-independent amino acid racemase</fullName>
    </alternativeName>
</protein>
<dbReference type="EC" id="5.1.1.7" evidence="1"/>
<dbReference type="EMBL" id="CP000675">
    <property type="protein sequence ID" value="ABQ56879.1"/>
    <property type="molecule type" value="Genomic_DNA"/>
</dbReference>
<dbReference type="RefSeq" id="WP_011945561.1">
    <property type="nucleotide sequence ID" value="NZ_JAPMSS010000006.1"/>
</dbReference>
<dbReference type="SMR" id="A5IHM9"/>
<dbReference type="KEGG" id="lpc:LPC_2978"/>
<dbReference type="HOGENOM" id="CLU_053306_1_1_6"/>
<dbReference type="UniPathway" id="UPA00034">
    <property type="reaction ID" value="UER00025"/>
</dbReference>
<dbReference type="GO" id="GO:0005829">
    <property type="term" value="C:cytosol"/>
    <property type="evidence" value="ECO:0007669"/>
    <property type="project" value="TreeGrafter"/>
</dbReference>
<dbReference type="GO" id="GO:0008837">
    <property type="term" value="F:diaminopimelate epimerase activity"/>
    <property type="evidence" value="ECO:0007669"/>
    <property type="project" value="UniProtKB-UniRule"/>
</dbReference>
<dbReference type="GO" id="GO:0009089">
    <property type="term" value="P:lysine biosynthetic process via diaminopimelate"/>
    <property type="evidence" value="ECO:0007669"/>
    <property type="project" value="UniProtKB-UniRule"/>
</dbReference>
<dbReference type="FunFam" id="3.10.310.10:FF:000001">
    <property type="entry name" value="Diaminopimelate epimerase"/>
    <property type="match status" value="1"/>
</dbReference>
<dbReference type="Gene3D" id="3.10.310.10">
    <property type="entry name" value="Diaminopimelate Epimerase, Chain A, domain 1"/>
    <property type="match status" value="2"/>
</dbReference>
<dbReference type="HAMAP" id="MF_00197">
    <property type="entry name" value="DAP_epimerase"/>
    <property type="match status" value="1"/>
</dbReference>
<dbReference type="InterPro" id="IPR001653">
    <property type="entry name" value="DAP_epimerase_DapF"/>
</dbReference>
<dbReference type="NCBIfam" id="TIGR00652">
    <property type="entry name" value="DapF"/>
    <property type="match status" value="1"/>
</dbReference>
<dbReference type="PANTHER" id="PTHR31689:SF0">
    <property type="entry name" value="DIAMINOPIMELATE EPIMERASE"/>
    <property type="match status" value="1"/>
</dbReference>
<dbReference type="PANTHER" id="PTHR31689">
    <property type="entry name" value="DIAMINOPIMELATE EPIMERASE, CHLOROPLASTIC"/>
    <property type="match status" value="1"/>
</dbReference>
<dbReference type="Pfam" id="PF01678">
    <property type="entry name" value="DAP_epimerase"/>
    <property type="match status" value="2"/>
</dbReference>
<dbReference type="SUPFAM" id="SSF54506">
    <property type="entry name" value="Diaminopimelate epimerase-like"/>
    <property type="match status" value="2"/>
</dbReference>
<reference key="1">
    <citation type="submission" date="2006-11" db="EMBL/GenBank/DDBJ databases">
        <title>Identification and characterization of a new conjugation/ type IVA secretion system (trb/tra) of L. pneumophila Corby localized on a mobile genomic island.</title>
        <authorList>
            <person name="Gloeckner G."/>
            <person name="Albert-Weissenberger C."/>
            <person name="Weinmann E."/>
            <person name="Jacobi S."/>
            <person name="Schunder E."/>
            <person name="Steinert M."/>
            <person name="Buchrieser C."/>
            <person name="Hacker J."/>
            <person name="Heuner K."/>
        </authorList>
    </citation>
    <scope>NUCLEOTIDE SEQUENCE [LARGE SCALE GENOMIC DNA]</scope>
    <source>
        <strain>Corby</strain>
    </source>
</reference>
<proteinExistence type="inferred from homology"/>
<keyword id="KW-0028">Amino-acid biosynthesis</keyword>
<keyword id="KW-0963">Cytoplasm</keyword>
<keyword id="KW-0413">Isomerase</keyword>
<keyword id="KW-0457">Lysine biosynthesis</keyword>
<evidence type="ECO:0000255" key="1">
    <source>
        <dbReference type="HAMAP-Rule" id="MF_00197"/>
    </source>
</evidence>
<name>DAPF_LEGPC</name>